<proteinExistence type="inferred from homology"/>
<comment type="function">
    <text evidence="1">ATP-dependent specificity component of the Clp protease. It directs the protease to specific substrates. Can perform chaperone functions in the absence of ClpP.</text>
</comment>
<comment type="subunit">
    <text evidence="1">Component of the ClpX-ClpP complex. Forms a hexameric ring that, in the presence of ATP, binds to fourteen ClpP subunits assembled into a disk-like structure with a central cavity, resembling the structure of eukaryotic proteasomes.</text>
</comment>
<comment type="similarity">
    <text evidence="1">Belongs to the ClpX chaperone family.</text>
</comment>
<organism>
    <name type="scientific">Lactococcus lactis subsp. lactis (strain IL1403)</name>
    <name type="common">Streptococcus lactis</name>
    <dbReference type="NCBI Taxonomy" id="272623"/>
    <lineage>
        <taxon>Bacteria</taxon>
        <taxon>Bacillati</taxon>
        <taxon>Bacillota</taxon>
        <taxon>Bacilli</taxon>
        <taxon>Lactobacillales</taxon>
        <taxon>Streptococcaceae</taxon>
        <taxon>Lactococcus</taxon>
    </lineage>
</organism>
<gene>
    <name evidence="1" type="primary">clpX</name>
    <name type="ordered locus">LL1151</name>
    <name type="ORF">L163602</name>
</gene>
<accession>Q9CGE6</accession>
<dbReference type="EMBL" id="AE005176">
    <property type="protein sequence ID" value="AAK05249.1"/>
    <property type="molecule type" value="Genomic_DNA"/>
</dbReference>
<dbReference type="PIR" id="G86768">
    <property type="entry name" value="G86768"/>
</dbReference>
<dbReference type="RefSeq" id="NP_267307.1">
    <property type="nucleotide sequence ID" value="NC_002662.1"/>
</dbReference>
<dbReference type="RefSeq" id="WP_010905787.1">
    <property type="nucleotide sequence ID" value="NC_002662.1"/>
</dbReference>
<dbReference type="SMR" id="Q9CGE6"/>
<dbReference type="PaxDb" id="272623-L163602"/>
<dbReference type="EnsemblBacteria" id="AAK05249">
    <property type="protein sequence ID" value="AAK05249"/>
    <property type="gene ID" value="L163602"/>
</dbReference>
<dbReference type="KEGG" id="lla:L163602"/>
<dbReference type="PATRIC" id="fig|272623.7.peg.1231"/>
<dbReference type="eggNOG" id="COG1219">
    <property type="taxonomic scope" value="Bacteria"/>
</dbReference>
<dbReference type="HOGENOM" id="CLU_014218_8_2_9"/>
<dbReference type="OrthoDB" id="9804062at2"/>
<dbReference type="Proteomes" id="UP000002196">
    <property type="component" value="Chromosome"/>
</dbReference>
<dbReference type="GO" id="GO:0009376">
    <property type="term" value="C:HslUV protease complex"/>
    <property type="evidence" value="ECO:0007669"/>
    <property type="project" value="TreeGrafter"/>
</dbReference>
<dbReference type="GO" id="GO:0005524">
    <property type="term" value="F:ATP binding"/>
    <property type="evidence" value="ECO:0007669"/>
    <property type="project" value="UniProtKB-UniRule"/>
</dbReference>
<dbReference type="GO" id="GO:0016887">
    <property type="term" value="F:ATP hydrolysis activity"/>
    <property type="evidence" value="ECO:0007669"/>
    <property type="project" value="InterPro"/>
</dbReference>
<dbReference type="GO" id="GO:0140662">
    <property type="term" value="F:ATP-dependent protein folding chaperone"/>
    <property type="evidence" value="ECO:0007669"/>
    <property type="project" value="InterPro"/>
</dbReference>
<dbReference type="GO" id="GO:0046983">
    <property type="term" value="F:protein dimerization activity"/>
    <property type="evidence" value="ECO:0007669"/>
    <property type="project" value="InterPro"/>
</dbReference>
<dbReference type="GO" id="GO:0051082">
    <property type="term" value="F:unfolded protein binding"/>
    <property type="evidence" value="ECO:0007669"/>
    <property type="project" value="UniProtKB-UniRule"/>
</dbReference>
<dbReference type="GO" id="GO:0008270">
    <property type="term" value="F:zinc ion binding"/>
    <property type="evidence" value="ECO:0007669"/>
    <property type="project" value="InterPro"/>
</dbReference>
<dbReference type="GO" id="GO:0051301">
    <property type="term" value="P:cell division"/>
    <property type="evidence" value="ECO:0007669"/>
    <property type="project" value="TreeGrafter"/>
</dbReference>
<dbReference type="GO" id="GO:0051603">
    <property type="term" value="P:proteolysis involved in protein catabolic process"/>
    <property type="evidence" value="ECO:0007669"/>
    <property type="project" value="TreeGrafter"/>
</dbReference>
<dbReference type="CDD" id="cd19497">
    <property type="entry name" value="RecA-like_ClpX"/>
    <property type="match status" value="1"/>
</dbReference>
<dbReference type="FunFam" id="1.10.8.60:FF:000002">
    <property type="entry name" value="ATP-dependent Clp protease ATP-binding subunit ClpX"/>
    <property type="match status" value="1"/>
</dbReference>
<dbReference type="FunFam" id="3.40.50.300:FF:000005">
    <property type="entry name" value="ATP-dependent Clp protease ATP-binding subunit ClpX"/>
    <property type="match status" value="1"/>
</dbReference>
<dbReference type="Gene3D" id="1.10.8.60">
    <property type="match status" value="1"/>
</dbReference>
<dbReference type="Gene3D" id="6.20.220.10">
    <property type="entry name" value="ClpX chaperone, C4-type zinc finger domain"/>
    <property type="match status" value="1"/>
</dbReference>
<dbReference type="Gene3D" id="3.40.50.300">
    <property type="entry name" value="P-loop containing nucleotide triphosphate hydrolases"/>
    <property type="match status" value="1"/>
</dbReference>
<dbReference type="HAMAP" id="MF_00175">
    <property type="entry name" value="ClpX"/>
    <property type="match status" value="1"/>
</dbReference>
<dbReference type="InterPro" id="IPR003593">
    <property type="entry name" value="AAA+_ATPase"/>
</dbReference>
<dbReference type="InterPro" id="IPR050052">
    <property type="entry name" value="ATP-dep_Clp_protease_ClpX"/>
</dbReference>
<dbReference type="InterPro" id="IPR003959">
    <property type="entry name" value="ATPase_AAA_core"/>
</dbReference>
<dbReference type="InterPro" id="IPR019489">
    <property type="entry name" value="Clp_ATPase_C"/>
</dbReference>
<dbReference type="InterPro" id="IPR004487">
    <property type="entry name" value="Clp_protease_ATP-bd_su_ClpX"/>
</dbReference>
<dbReference type="InterPro" id="IPR046425">
    <property type="entry name" value="ClpX_bact"/>
</dbReference>
<dbReference type="InterPro" id="IPR027417">
    <property type="entry name" value="P-loop_NTPase"/>
</dbReference>
<dbReference type="InterPro" id="IPR010603">
    <property type="entry name" value="Znf_CppX_C4"/>
</dbReference>
<dbReference type="InterPro" id="IPR038366">
    <property type="entry name" value="Znf_CppX_C4_sf"/>
</dbReference>
<dbReference type="NCBIfam" id="TIGR00382">
    <property type="entry name" value="clpX"/>
    <property type="match status" value="1"/>
</dbReference>
<dbReference type="NCBIfam" id="NF003745">
    <property type="entry name" value="PRK05342.1"/>
    <property type="match status" value="1"/>
</dbReference>
<dbReference type="PANTHER" id="PTHR48102:SF7">
    <property type="entry name" value="ATP-DEPENDENT CLP PROTEASE ATP-BINDING SUBUNIT CLPX-LIKE, MITOCHONDRIAL"/>
    <property type="match status" value="1"/>
</dbReference>
<dbReference type="PANTHER" id="PTHR48102">
    <property type="entry name" value="ATP-DEPENDENT CLP PROTEASE ATP-BINDING SUBUNIT CLPX-LIKE, MITOCHONDRIAL-RELATED"/>
    <property type="match status" value="1"/>
</dbReference>
<dbReference type="Pfam" id="PF07724">
    <property type="entry name" value="AAA_2"/>
    <property type="match status" value="1"/>
</dbReference>
<dbReference type="Pfam" id="PF10431">
    <property type="entry name" value="ClpB_D2-small"/>
    <property type="match status" value="1"/>
</dbReference>
<dbReference type="Pfam" id="PF06689">
    <property type="entry name" value="zf-C4_ClpX"/>
    <property type="match status" value="1"/>
</dbReference>
<dbReference type="SMART" id="SM00382">
    <property type="entry name" value="AAA"/>
    <property type="match status" value="1"/>
</dbReference>
<dbReference type="SMART" id="SM01086">
    <property type="entry name" value="ClpB_D2-small"/>
    <property type="match status" value="1"/>
</dbReference>
<dbReference type="SMART" id="SM00994">
    <property type="entry name" value="zf-C4_ClpX"/>
    <property type="match status" value="1"/>
</dbReference>
<dbReference type="SUPFAM" id="SSF57716">
    <property type="entry name" value="Glucocorticoid receptor-like (DNA-binding domain)"/>
    <property type="match status" value="1"/>
</dbReference>
<dbReference type="SUPFAM" id="SSF52540">
    <property type="entry name" value="P-loop containing nucleoside triphosphate hydrolases"/>
    <property type="match status" value="1"/>
</dbReference>
<dbReference type="PROSITE" id="PS51902">
    <property type="entry name" value="CLPX_ZB"/>
    <property type="match status" value="1"/>
</dbReference>
<keyword id="KW-0067">ATP-binding</keyword>
<keyword id="KW-0143">Chaperone</keyword>
<keyword id="KW-0479">Metal-binding</keyword>
<keyword id="KW-0547">Nucleotide-binding</keyword>
<keyword id="KW-1185">Reference proteome</keyword>
<keyword id="KW-0862">Zinc</keyword>
<evidence type="ECO:0000255" key="1">
    <source>
        <dbReference type="HAMAP-Rule" id="MF_00175"/>
    </source>
</evidence>
<evidence type="ECO:0000255" key="2">
    <source>
        <dbReference type="PROSITE-ProRule" id="PRU01250"/>
    </source>
</evidence>
<sequence length="411" mass="45977">MSNTQNPNIHCSFCGKSQDDVKKLIAGSDVYICNECIELSTRILEEELREEQDSEMLEVKTPKEMFDHLNEYVIGQEKAKRALAVAVYNHYKRINFAASKIAEDIELQKSNILLIGPTGSGKTFLAQTLAKSLNVPFAIADATSLTEAGYVGEDVENILLKLLQASDFNIERAERGIIYIDEIDKIAKKSENVSITRDVSGEGVQQALLKIIEGTVASVPPQGGRKHPNQEMIQIDTKNILFIVGGAFDGIEEIVKQRLGEKIIGFGANNKKLNDDDSYMQEIIAEDIQKFGLIPEFIGRLPIVAALERLTEEDLIQILTEPKNALIKQYKQLLLFDNVELEFEDEALMAIARKAIERKTGARGLRSIIEEVMMDIMFEVPSHEEITKVIINEAVVDGKAEPQMIREAKKK</sequence>
<reference key="1">
    <citation type="journal article" date="2001" name="Genome Res.">
        <title>The complete genome sequence of the lactic acid bacterium Lactococcus lactis ssp. lactis IL1403.</title>
        <authorList>
            <person name="Bolotin A."/>
            <person name="Wincker P."/>
            <person name="Mauger S."/>
            <person name="Jaillon O."/>
            <person name="Malarme K."/>
            <person name="Weissenbach J."/>
            <person name="Ehrlich S.D."/>
            <person name="Sorokin A."/>
        </authorList>
    </citation>
    <scope>NUCLEOTIDE SEQUENCE [LARGE SCALE GENOMIC DNA]</scope>
    <source>
        <strain>IL1403</strain>
    </source>
</reference>
<protein>
    <recommendedName>
        <fullName evidence="1">ATP-dependent Clp protease ATP-binding subunit ClpX</fullName>
    </recommendedName>
</protein>
<feature type="chain" id="PRO_0000160369" description="ATP-dependent Clp protease ATP-binding subunit ClpX">
    <location>
        <begin position="1"/>
        <end position="411"/>
    </location>
</feature>
<feature type="domain" description="ClpX-type ZB" evidence="2">
    <location>
        <begin position="1"/>
        <end position="52"/>
    </location>
</feature>
<feature type="binding site" evidence="2">
    <location>
        <position position="11"/>
    </location>
    <ligand>
        <name>Zn(2+)</name>
        <dbReference type="ChEBI" id="CHEBI:29105"/>
    </ligand>
</feature>
<feature type="binding site" evidence="2">
    <location>
        <position position="14"/>
    </location>
    <ligand>
        <name>Zn(2+)</name>
        <dbReference type="ChEBI" id="CHEBI:29105"/>
    </ligand>
</feature>
<feature type="binding site" evidence="2">
    <location>
        <position position="33"/>
    </location>
    <ligand>
        <name>Zn(2+)</name>
        <dbReference type="ChEBI" id="CHEBI:29105"/>
    </ligand>
</feature>
<feature type="binding site" evidence="2">
    <location>
        <position position="36"/>
    </location>
    <ligand>
        <name>Zn(2+)</name>
        <dbReference type="ChEBI" id="CHEBI:29105"/>
    </ligand>
</feature>
<feature type="binding site" evidence="1">
    <location>
        <begin position="117"/>
        <end position="124"/>
    </location>
    <ligand>
        <name>ATP</name>
        <dbReference type="ChEBI" id="CHEBI:30616"/>
    </ligand>
</feature>
<name>CLPX_LACLA</name>